<name>RP25L_HUMAN</name>
<feature type="chain" id="PRO_0000271032" description="Ribonuclease P protein subunit p25-like protein">
    <location>
        <begin position="1"/>
        <end position="163"/>
    </location>
</feature>
<feature type="region of interest" description="Disordered" evidence="1">
    <location>
        <begin position="1"/>
        <end position="22"/>
    </location>
</feature>
<feature type="region of interest" description="Disordered" evidence="1">
    <location>
        <begin position="129"/>
        <end position="163"/>
    </location>
</feature>
<feature type="compositionally biased region" description="Low complexity" evidence="1">
    <location>
        <begin position="143"/>
        <end position="152"/>
    </location>
</feature>
<feature type="compositionally biased region" description="Basic residues" evidence="1">
    <location>
        <begin position="153"/>
        <end position="163"/>
    </location>
</feature>
<dbReference type="EMBL" id="AL160270">
    <property type="status" value="NOT_ANNOTATED_CDS"/>
    <property type="molecule type" value="Genomic_DNA"/>
</dbReference>
<dbReference type="EMBL" id="CH471071">
    <property type="protein sequence ID" value="EAW58443.1"/>
    <property type="molecule type" value="Genomic_DNA"/>
</dbReference>
<dbReference type="EMBL" id="CH471071">
    <property type="protein sequence ID" value="EAW58444.1"/>
    <property type="molecule type" value="Genomic_DNA"/>
</dbReference>
<dbReference type="EMBL" id="BC032136">
    <property type="protein sequence ID" value="AAH32136.1"/>
    <property type="molecule type" value="mRNA"/>
</dbReference>
<dbReference type="CCDS" id="CCDS6559.1"/>
<dbReference type="RefSeq" id="NP_680544.1">
    <property type="nucleotide sequence ID" value="NM_148178.3"/>
</dbReference>
<dbReference type="RefSeq" id="NP_680545.1">
    <property type="nucleotide sequence ID" value="NM_148179.3"/>
</dbReference>
<dbReference type="SMR" id="Q8N5L8"/>
<dbReference type="BioGRID" id="126519">
    <property type="interactions" value="80"/>
</dbReference>
<dbReference type="FunCoup" id="Q8N5L8">
    <property type="interactions" value="392"/>
</dbReference>
<dbReference type="IntAct" id="Q8N5L8">
    <property type="interactions" value="53"/>
</dbReference>
<dbReference type="MINT" id="Q8N5L8"/>
<dbReference type="STRING" id="9606.ENSP00000297613"/>
<dbReference type="GlyGen" id="Q8N5L8">
    <property type="glycosylation" value="1 site, 1 O-linked glycan (1 site)"/>
</dbReference>
<dbReference type="iPTMnet" id="Q8N5L8"/>
<dbReference type="PhosphoSitePlus" id="Q8N5L8"/>
<dbReference type="BioMuta" id="RPP25L"/>
<dbReference type="DMDM" id="74751030"/>
<dbReference type="jPOST" id="Q8N5L8"/>
<dbReference type="MassIVE" id="Q8N5L8"/>
<dbReference type="PaxDb" id="9606-ENSP00000297613"/>
<dbReference type="PeptideAtlas" id="Q8N5L8"/>
<dbReference type="ProteomicsDB" id="72072"/>
<dbReference type="Pumba" id="Q8N5L8"/>
<dbReference type="Antibodypedia" id="55898">
    <property type="antibodies" value="78 antibodies from 15 providers"/>
</dbReference>
<dbReference type="DNASU" id="138716"/>
<dbReference type="Ensembl" id="ENST00000297613.4">
    <property type="protein sequence ID" value="ENSP00000297613.4"/>
    <property type="gene ID" value="ENSG00000164967.10"/>
</dbReference>
<dbReference type="Ensembl" id="ENST00000378959.9">
    <property type="protein sequence ID" value="ENSP00000368242.4"/>
    <property type="gene ID" value="ENSG00000164967.10"/>
</dbReference>
<dbReference type="GeneID" id="138716"/>
<dbReference type="KEGG" id="hsa:138716"/>
<dbReference type="MANE-Select" id="ENST00000378959.9">
    <property type="protein sequence ID" value="ENSP00000368242.4"/>
    <property type="RefSeq nucleotide sequence ID" value="NM_148178.3"/>
    <property type="RefSeq protein sequence ID" value="NP_680544.1"/>
</dbReference>
<dbReference type="UCSC" id="uc003zuu.4">
    <property type="organism name" value="human"/>
</dbReference>
<dbReference type="AGR" id="HGNC:19909"/>
<dbReference type="CTD" id="138716"/>
<dbReference type="GeneCards" id="RPP25L"/>
<dbReference type="HGNC" id="HGNC:19909">
    <property type="gene designation" value="RPP25L"/>
</dbReference>
<dbReference type="HPA" id="ENSG00000164967">
    <property type="expression patterns" value="Tissue enhanced (skeletal)"/>
</dbReference>
<dbReference type="neXtProt" id="NX_Q8N5L8"/>
<dbReference type="OpenTargets" id="ENSG00000164967"/>
<dbReference type="PharmGKB" id="PA134989644"/>
<dbReference type="VEuPathDB" id="HostDB:ENSG00000164967"/>
<dbReference type="eggNOG" id="KOG2567">
    <property type="taxonomic scope" value="Eukaryota"/>
</dbReference>
<dbReference type="GeneTree" id="ENSGT00390000002564"/>
<dbReference type="HOGENOM" id="CLU_096311_0_0_1"/>
<dbReference type="InParanoid" id="Q8N5L8"/>
<dbReference type="OMA" id="RNLPVIW"/>
<dbReference type="OrthoDB" id="424402at2759"/>
<dbReference type="PAN-GO" id="Q8N5L8">
    <property type="GO annotations" value="3 GO annotations based on evolutionary models"/>
</dbReference>
<dbReference type="PhylomeDB" id="Q8N5L8"/>
<dbReference type="TreeFam" id="TF325688"/>
<dbReference type="PathwayCommons" id="Q8N5L8"/>
<dbReference type="SignaLink" id="Q8N5L8"/>
<dbReference type="BioGRID-ORCS" id="138716">
    <property type="hits" value="220 hits in 1165 CRISPR screens"/>
</dbReference>
<dbReference type="CD-CODE" id="91857CE7">
    <property type="entry name" value="Nucleolus"/>
</dbReference>
<dbReference type="ChiTaRS" id="RPP25L">
    <property type="organism name" value="human"/>
</dbReference>
<dbReference type="GenomeRNAi" id="138716"/>
<dbReference type="Pharos" id="Q8N5L8">
    <property type="development level" value="Tdark"/>
</dbReference>
<dbReference type="PRO" id="PR:Q8N5L8"/>
<dbReference type="Proteomes" id="UP000005640">
    <property type="component" value="Chromosome 9"/>
</dbReference>
<dbReference type="RNAct" id="Q8N5L8">
    <property type="molecule type" value="protein"/>
</dbReference>
<dbReference type="Bgee" id="ENSG00000164967">
    <property type="expression patterns" value="Expressed in tibialis anterior and 180 other cell types or tissues"/>
</dbReference>
<dbReference type="GO" id="GO:0005634">
    <property type="term" value="C:nucleus"/>
    <property type="evidence" value="ECO:0007669"/>
    <property type="project" value="UniProtKB-SubCell"/>
</dbReference>
<dbReference type="GO" id="GO:0000172">
    <property type="term" value="C:ribonuclease MRP complex"/>
    <property type="evidence" value="ECO:0000318"/>
    <property type="project" value="GO_Central"/>
</dbReference>
<dbReference type="GO" id="GO:0003723">
    <property type="term" value="F:RNA binding"/>
    <property type="evidence" value="ECO:0007005"/>
    <property type="project" value="UniProtKB"/>
</dbReference>
<dbReference type="GO" id="GO:0001682">
    <property type="term" value="P:tRNA 5'-leader removal"/>
    <property type="evidence" value="ECO:0000318"/>
    <property type="project" value="GO_Central"/>
</dbReference>
<dbReference type="FunFam" id="3.30.110.20:FF:000004">
    <property type="entry name" value="Ribonuclease P protein subunit p25-like protein"/>
    <property type="match status" value="1"/>
</dbReference>
<dbReference type="Gene3D" id="3.30.110.20">
    <property type="entry name" value="Alba-like domain"/>
    <property type="match status" value="1"/>
</dbReference>
<dbReference type="InterPro" id="IPR036882">
    <property type="entry name" value="Alba-like_dom_sf"/>
</dbReference>
<dbReference type="InterPro" id="IPR051958">
    <property type="entry name" value="Alba-like_NAB"/>
</dbReference>
<dbReference type="InterPro" id="IPR002775">
    <property type="entry name" value="DNA/RNA-bd_Alba-like"/>
</dbReference>
<dbReference type="PANTHER" id="PTHR13516:SF8">
    <property type="entry name" value="RIBONUCLEASE P PROTEIN SUBUNIT P25-LIKE PROTEIN"/>
    <property type="match status" value="1"/>
</dbReference>
<dbReference type="PANTHER" id="PTHR13516">
    <property type="entry name" value="RIBONUCLEASE P SUBUNIT P25"/>
    <property type="match status" value="1"/>
</dbReference>
<dbReference type="Pfam" id="PF01918">
    <property type="entry name" value="Alba"/>
    <property type="match status" value="1"/>
</dbReference>
<dbReference type="SUPFAM" id="SSF82704">
    <property type="entry name" value="AlbA-like"/>
    <property type="match status" value="1"/>
</dbReference>
<accession>Q8N5L8</accession>
<accession>D3DRM5</accession>
<evidence type="ECO:0000256" key="1">
    <source>
        <dbReference type="SAM" id="MobiDB-lite"/>
    </source>
</evidence>
<evidence type="ECO:0000305" key="2"/>
<reference key="1">
    <citation type="journal article" date="2004" name="Nature">
        <title>DNA sequence and analysis of human chromosome 9.</title>
        <authorList>
            <person name="Humphray S.J."/>
            <person name="Oliver K."/>
            <person name="Hunt A.R."/>
            <person name="Plumb R.W."/>
            <person name="Loveland J.E."/>
            <person name="Howe K.L."/>
            <person name="Andrews T.D."/>
            <person name="Searle S."/>
            <person name="Hunt S.E."/>
            <person name="Scott C.E."/>
            <person name="Jones M.C."/>
            <person name="Ainscough R."/>
            <person name="Almeida J.P."/>
            <person name="Ambrose K.D."/>
            <person name="Ashwell R.I.S."/>
            <person name="Babbage A.K."/>
            <person name="Babbage S."/>
            <person name="Bagguley C.L."/>
            <person name="Bailey J."/>
            <person name="Banerjee R."/>
            <person name="Barker D.J."/>
            <person name="Barlow K.F."/>
            <person name="Bates K."/>
            <person name="Beasley H."/>
            <person name="Beasley O."/>
            <person name="Bird C.P."/>
            <person name="Bray-Allen S."/>
            <person name="Brown A.J."/>
            <person name="Brown J.Y."/>
            <person name="Burford D."/>
            <person name="Burrill W."/>
            <person name="Burton J."/>
            <person name="Carder C."/>
            <person name="Carter N.P."/>
            <person name="Chapman J.C."/>
            <person name="Chen Y."/>
            <person name="Clarke G."/>
            <person name="Clark S.Y."/>
            <person name="Clee C.M."/>
            <person name="Clegg S."/>
            <person name="Collier R.E."/>
            <person name="Corby N."/>
            <person name="Crosier M."/>
            <person name="Cummings A.T."/>
            <person name="Davies J."/>
            <person name="Dhami P."/>
            <person name="Dunn M."/>
            <person name="Dutta I."/>
            <person name="Dyer L.W."/>
            <person name="Earthrowl M.E."/>
            <person name="Faulkner L."/>
            <person name="Fleming C.J."/>
            <person name="Frankish A."/>
            <person name="Frankland J.A."/>
            <person name="French L."/>
            <person name="Fricker D.G."/>
            <person name="Garner P."/>
            <person name="Garnett J."/>
            <person name="Ghori J."/>
            <person name="Gilbert J.G.R."/>
            <person name="Glison C."/>
            <person name="Grafham D.V."/>
            <person name="Gribble S."/>
            <person name="Griffiths C."/>
            <person name="Griffiths-Jones S."/>
            <person name="Grocock R."/>
            <person name="Guy J."/>
            <person name="Hall R.E."/>
            <person name="Hammond S."/>
            <person name="Harley J.L."/>
            <person name="Harrison E.S.I."/>
            <person name="Hart E.A."/>
            <person name="Heath P.D."/>
            <person name="Henderson C.D."/>
            <person name="Hopkins B.L."/>
            <person name="Howard P.J."/>
            <person name="Howden P.J."/>
            <person name="Huckle E."/>
            <person name="Johnson C."/>
            <person name="Johnson D."/>
            <person name="Joy A.A."/>
            <person name="Kay M."/>
            <person name="Keenan S."/>
            <person name="Kershaw J.K."/>
            <person name="Kimberley A.M."/>
            <person name="King A."/>
            <person name="Knights A."/>
            <person name="Laird G.K."/>
            <person name="Langford C."/>
            <person name="Lawlor S."/>
            <person name="Leongamornlert D.A."/>
            <person name="Leversha M."/>
            <person name="Lloyd C."/>
            <person name="Lloyd D.M."/>
            <person name="Lovell J."/>
            <person name="Martin S."/>
            <person name="Mashreghi-Mohammadi M."/>
            <person name="Matthews L."/>
            <person name="McLaren S."/>
            <person name="McLay K.E."/>
            <person name="McMurray A."/>
            <person name="Milne S."/>
            <person name="Nickerson T."/>
            <person name="Nisbett J."/>
            <person name="Nordsiek G."/>
            <person name="Pearce A.V."/>
            <person name="Peck A.I."/>
            <person name="Porter K.M."/>
            <person name="Pandian R."/>
            <person name="Pelan S."/>
            <person name="Phillimore B."/>
            <person name="Povey S."/>
            <person name="Ramsey Y."/>
            <person name="Rand V."/>
            <person name="Scharfe M."/>
            <person name="Sehra H.K."/>
            <person name="Shownkeen R."/>
            <person name="Sims S.K."/>
            <person name="Skuce C.D."/>
            <person name="Smith M."/>
            <person name="Steward C.A."/>
            <person name="Swarbreck D."/>
            <person name="Sycamore N."/>
            <person name="Tester J."/>
            <person name="Thorpe A."/>
            <person name="Tracey A."/>
            <person name="Tromans A."/>
            <person name="Thomas D.W."/>
            <person name="Wall M."/>
            <person name="Wallis J.M."/>
            <person name="West A.P."/>
            <person name="Whitehead S.L."/>
            <person name="Willey D.L."/>
            <person name="Williams S.A."/>
            <person name="Wilming L."/>
            <person name="Wray P.W."/>
            <person name="Young L."/>
            <person name="Ashurst J.L."/>
            <person name="Coulson A."/>
            <person name="Blocker H."/>
            <person name="Durbin R.M."/>
            <person name="Sulston J.E."/>
            <person name="Hubbard T."/>
            <person name="Jackson M.J."/>
            <person name="Bentley D.R."/>
            <person name="Beck S."/>
            <person name="Rogers J."/>
            <person name="Dunham I."/>
        </authorList>
    </citation>
    <scope>NUCLEOTIDE SEQUENCE [LARGE SCALE GENOMIC DNA]</scope>
</reference>
<reference key="2">
    <citation type="submission" date="2005-09" db="EMBL/GenBank/DDBJ databases">
        <authorList>
            <person name="Mural R.J."/>
            <person name="Istrail S."/>
            <person name="Sutton G.G."/>
            <person name="Florea L."/>
            <person name="Halpern A.L."/>
            <person name="Mobarry C.M."/>
            <person name="Lippert R."/>
            <person name="Walenz B."/>
            <person name="Shatkay H."/>
            <person name="Dew I."/>
            <person name="Miller J.R."/>
            <person name="Flanigan M.J."/>
            <person name="Edwards N.J."/>
            <person name="Bolanos R."/>
            <person name="Fasulo D."/>
            <person name="Halldorsson B.V."/>
            <person name="Hannenhalli S."/>
            <person name="Turner R."/>
            <person name="Yooseph S."/>
            <person name="Lu F."/>
            <person name="Nusskern D.R."/>
            <person name="Shue B.C."/>
            <person name="Zheng X.H."/>
            <person name="Zhong F."/>
            <person name="Delcher A.L."/>
            <person name="Huson D.H."/>
            <person name="Kravitz S.A."/>
            <person name="Mouchard L."/>
            <person name="Reinert K."/>
            <person name="Remington K.A."/>
            <person name="Clark A.G."/>
            <person name="Waterman M.S."/>
            <person name="Eichler E.E."/>
            <person name="Adams M.D."/>
            <person name="Hunkapiller M.W."/>
            <person name="Myers E.W."/>
            <person name="Venter J.C."/>
        </authorList>
    </citation>
    <scope>NUCLEOTIDE SEQUENCE [LARGE SCALE GENOMIC DNA]</scope>
</reference>
<reference key="3">
    <citation type="journal article" date="2004" name="Genome Res.">
        <title>The status, quality, and expansion of the NIH full-length cDNA project: the Mammalian Gene Collection (MGC).</title>
        <authorList>
            <consortium name="The MGC Project Team"/>
        </authorList>
    </citation>
    <scope>NUCLEOTIDE SEQUENCE [LARGE SCALE MRNA]</scope>
    <source>
        <tissue>Skin</tissue>
    </source>
</reference>
<reference key="4">
    <citation type="journal article" date="2006" name="Nucleic Acids Res.">
        <title>Inventory and analysis of the protein subunits of the ribonucleases P and MRP provides further evidence of homology between the yeast and human enzymes.</title>
        <authorList>
            <person name="Rosenblad M.A."/>
            <person name="Lopez M.D."/>
            <person name="Piccinelli P."/>
            <person name="Samuelsson T."/>
        </authorList>
    </citation>
    <scope>PHYLOGENY</scope>
</reference>
<reference key="5">
    <citation type="journal article" date="2011" name="BMC Syst. Biol.">
        <title>Initial characterization of the human central proteome.</title>
        <authorList>
            <person name="Burkard T.R."/>
            <person name="Planyavsky M."/>
            <person name="Kaupe I."/>
            <person name="Breitwieser F.P."/>
            <person name="Buerckstuemmer T."/>
            <person name="Bennett K.L."/>
            <person name="Superti-Furga G."/>
            <person name="Colinge J."/>
        </authorList>
    </citation>
    <scope>IDENTIFICATION BY MASS SPECTROMETRY [LARGE SCALE ANALYSIS]</scope>
</reference>
<gene>
    <name type="primary">RPP25L</name>
    <name type="synonym">C9orf23</name>
</gene>
<proteinExistence type="evidence at protein level"/>
<keyword id="KW-0539">Nucleus</keyword>
<keyword id="KW-1267">Proteomics identification</keyword>
<keyword id="KW-1185">Reference proteome</keyword>
<comment type="function">
    <text>May be a component of ribonuclease P or MRP.</text>
</comment>
<comment type="interaction">
    <interactant intactId="EBI-10189722">
        <id>Q8N5L8</id>
    </interactant>
    <interactant intactId="EBI-302405">
        <id>Q92974</id>
        <label>ARHGEF2</label>
    </interactant>
    <organismsDiffer>false</organismsDiffer>
    <experiments>9</experiments>
</comment>
<comment type="interaction">
    <interactant intactId="EBI-10189722">
        <id>Q8N5L8</id>
    </interactant>
    <interactant intactId="EBI-740929">
        <id>Q53G59</id>
        <label>KLHL12</label>
    </interactant>
    <organismsDiffer>false</organismsDiffer>
    <experiments>6</experiments>
</comment>
<comment type="interaction">
    <interactant intactId="EBI-10189722">
        <id>Q8N5L8</id>
    </interactant>
    <interactant intactId="EBI-10172526">
        <id>Q9UJV3-2</id>
        <label>MID2</label>
    </interactant>
    <organismsDiffer>false</organismsDiffer>
    <experiments>3</experiments>
</comment>
<comment type="interaction">
    <interactant intactId="EBI-10189722">
        <id>Q8N5L8</id>
    </interactant>
    <interactant intactId="EBI-302345">
        <id>Q8ND90</id>
        <label>PNMA1</label>
    </interactant>
    <organismsDiffer>false</organismsDiffer>
    <experiments>3</experiments>
</comment>
<comment type="interaction">
    <interactant intactId="EBI-10189722">
        <id>Q8N5L8</id>
    </interactant>
    <interactant intactId="EBI-366574">
        <id>O75817</id>
        <label>POP7</label>
    </interactant>
    <organismsDiffer>false</organismsDiffer>
    <experiments>14</experiments>
</comment>
<comment type="interaction">
    <interactant intactId="EBI-10189722">
        <id>Q8N5L8</id>
    </interactant>
    <interactant intactId="EBI-1050213">
        <id>Q96KN7</id>
        <label>RPGRIP1</label>
    </interactant>
    <organismsDiffer>false</organismsDiffer>
    <experiments>3</experiments>
</comment>
<comment type="subcellular location">
    <subcellularLocation>
        <location evidence="2">Nucleus</location>
    </subcellularLocation>
</comment>
<comment type="similarity">
    <text evidence="2">Belongs to the histone-like Alba family.</text>
</comment>
<protein>
    <recommendedName>
        <fullName>Ribonuclease P protein subunit p25-like protein</fullName>
        <shortName>RNase P protein subunit-like p25</shortName>
    </recommendedName>
    <alternativeName>
        <fullName>Rpp25-like protein</fullName>
    </alternativeName>
</protein>
<sequence length="163" mass="17631">MEHYRKAGSVELPAPSPMPQLPPDTLEMRVRDGSKIRNLLGLALGRLEGGSARHVVFSGSGRAAGKAVSCAEIVKRRVPGLHQLTKLRFLQTEDSWVPASPDTGLDPLTVRRHVPAVWVLLSRDPLDPNECGYQPPGAPPGLGSMPSSSCGPRSRRRARDTRS</sequence>
<organism>
    <name type="scientific">Homo sapiens</name>
    <name type="common">Human</name>
    <dbReference type="NCBI Taxonomy" id="9606"/>
    <lineage>
        <taxon>Eukaryota</taxon>
        <taxon>Metazoa</taxon>
        <taxon>Chordata</taxon>
        <taxon>Craniata</taxon>
        <taxon>Vertebrata</taxon>
        <taxon>Euteleostomi</taxon>
        <taxon>Mammalia</taxon>
        <taxon>Eutheria</taxon>
        <taxon>Euarchontoglires</taxon>
        <taxon>Primates</taxon>
        <taxon>Haplorrhini</taxon>
        <taxon>Catarrhini</taxon>
        <taxon>Hominidae</taxon>
        <taxon>Homo</taxon>
    </lineage>
</organism>